<reference key="1">
    <citation type="journal article" date="2006" name="Nature">
        <title>Insights from the genome of the biotrophic fungal plant pathogen Ustilago maydis.</title>
        <authorList>
            <person name="Kaemper J."/>
            <person name="Kahmann R."/>
            <person name="Boelker M."/>
            <person name="Ma L.-J."/>
            <person name="Brefort T."/>
            <person name="Saville B.J."/>
            <person name="Banuett F."/>
            <person name="Kronstad J.W."/>
            <person name="Gold S.E."/>
            <person name="Mueller O."/>
            <person name="Perlin M.H."/>
            <person name="Woesten H.A.B."/>
            <person name="de Vries R."/>
            <person name="Ruiz-Herrera J."/>
            <person name="Reynaga-Pena C.G."/>
            <person name="Snetselaar K."/>
            <person name="McCann M."/>
            <person name="Perez-Martin J."/>
            <person name="Feldbruegge M."/>
            <person name="Basse C.W."/>
            <person name="Steinberg G."/>
            <person name="Ibeas J.I."/>
            <person name="Holloman W."/>
            <person name="Guzman P."/>
            <person name="Farman M.L."/>
            <person name="Stajich J.E."/>
            <person name="Sentandreu R."/>
            <person name="Gonzalez-Prieto J.M."/>
            <person name="Kennell J.C."/>
            <person name="Molina L."/>
            <person name="Schirawski J."/>
            <person name="Mendoza-Mendoza A."/>
            <person name="Greilinger D."/>
            <person name="Muench K."/>
            <person name="Roessel N."/>
            <person name="Scherer M."/>
            <person name="Vranes M."/>
            <person name="Ladendorf O."/>
            <person name="Vincon V."/>
            <person name="Fuchs U."/>
            <person name="Sandrock B."/>
            <person name="Meng S."/>
            <person name="Ho E.C.H."/>
            <person name="Cahill M.J."/>
            <person name="Boyce K.J."/>
            <person name="Klose J."/>
            <person name="Klosterman S.J."/>
            <person name="Deelstra H.J."/>
            <person name="Ortiz-Castellanos L."/>
            <person name="Li W."/>
            <person name="Sanchez-Alonso P."/>
            <person name="Schreier P.H."/>
            <person name="Haeuser-Hahn I."/>
            <person name="Vaupel M."/>
            <person name="Koopmann E."/>
            <person name="Friedrich G."/>
            <person name="Voss H."/>
            <person name="Schlueter T."/>
            <person name="Margolis J."/>
            <person name="Platt D."/>
            <person name="Swimmer C."/>
            <person name="Gnirke A."/>
            <person name="Chen F."/>
            <person name="Vysotskaia V."/>
            <person name="Mannhaupt G."/>
            <person name="Gueldener U."/>
            <person name="Muensterkoetter M."/>
            <person name="Haase D."/>
            <person name="Oesterheld M."/>
            <person name="Mewes H.-W."/>
            <person name="Mauceli E.W."/>
            <person name="DeCaprio D."/>
            <person name="Wade C.M."/>
            <person name="Butler J."/>
            <person name="Young S.K."/>
            <person name="Jaffe D.B."/>
            <person name="Calvo S.E."/>
            <person name="Nusbaum C."/>
            <person name="Galagan J.E."/>
            <person name="Birren B.W."/>
        </authorList>
    </citation>
    <scope>NUCLEOTIDE SEQUENCE [LARGE SCALE GENOMIC DNA]</scope>
    <source>
        <strain>DSM 14603 / FGSC 9021 / UM521</strain>
    </source>
</reference>
<reference key="2">
    <citation type="submission" date="2014-09" db="EMBL/GenBank/DDBJ databases">
        <authorList>
            <person name="Gueldener U."/>
            <person name="Muensterkoetter M."/>
            <person name="Walter M.C."/>
            <person name="Mannhaupt G."/>
            <person name="Kahmann R."/>
        </authorList>
    </citation>
    <scope>GENOME REANNOTATION</scope>
    <source>
        <strain>DSM 14603 / FGSC 9021 / UM521</strain>
    </source>
</reference>
<reference key="3">
    <citation type="journal article" date="2021" name="New Phytol.">
        <title>A small Ustilago maydis effector acts as a novel adhesin for hyphal aggregation in plant tumors.</title>
        <authorList>
            <person name="Fukada F."/>
            <person name="Roessel N."/>
            <person name="Muench K."/>
            <person name="Glatter T."/>
            <person name="Kahmann R."/>
        </authorList>
    </citation>
    <scope>FUNCTION</scope>
    <scope>DISRUPTION PHENOTYPE</scope>
    <scope>SUBCELLULAR LOCATION</scope>
    <scope>INTERACTION WITH REP1</scope>
</reference>
<protein>
    <recommendedName>
        <fullName evidence="3">Late effector protein 1</fullName>
    </recommendedName>
</protein>
<sequence>MRSHQMAAFFAVSLMMMVVLGALSAPIPSPRPIEDIYPSQLPDAGTAQIVAGDSGILPTLLAVGFDPNDRSVLKPVKNSMTQRNTA</sequence>
<name>LEP1_MYCMD</name>
<evidence type="ECO:0000255" key="1"/>
<evidence type="ECO:0000269" key="2">
    <source>
    </source>
</evidence>
<evidence type="ECO:0000303" key="3">
    <source>
    </source>
</evidence>
<evidence type="ECO:0000305" key="4"/>
<gene>
    <name evidence="3" type="primary">lep1</name>
    <name type="ORF">UMAG_11940</name>
</gene>
<organism>
    <name type="scientific">Mycosarcoma maydis</name>
    <name type="common">Corn smut fungus</name>
    <name type="synonym">Ustilago maydis</name>
    <dbReference type="NCBI Taxonomy" id="5270"/>
    <lineage>
        <taxon>Eukaryota</taxon>
        <taxon>Fungi</taxon>
        <taxon>Dikarya</taxon>
        <taxon>Basidiomycota</taxon>
        <taxon>Ustilaginomycotina</taxon>
        <taxon>Ustilaginomycetes</taxon>
        <taxon>Ustilaginales</taxon>
        <taxon>Ustilaginaceae</taxon>
        <taxon>Mycosarcoma</taxon>
    </lineage>
</organism>
<keyword id="KW-0134">Cell wall</keyword>
<keyword id="KW-1185">Reference proteome</keyword>
<keyword id="KW-0964">Secreted</keyword>
<keyword id="KW-0732">Signal</keyword>
<keyword id="KW-0843">Virulence</keyword>
<proteinExistence type="evidence at protein level"/>
<accession>A0A0D1C5X6</accession>
<dbReference type="EMBL" id="CM003146">
    <property type="protein sequence ID" value="KIS69032.1"/>
    <property type="molecule type" value="Genomic_DNA"/>
</dbReference>
<dbReference type="RefSeq" id="XP_011389566.1">
    <property type="nucleotide sequence ID" value="XM_011391264.1"/>
</dbReference>
<dbReference type="EnsemblFungi" id="KIS69032">
    <property type="protein sequence ID" value="KIS69032"/>
    <property type="gene ID" value="UMAG_11940"/>
</dbReference>
<dbReference type="GeneID" id="23567746"/>
<dbReference type="KEGG" id="uma:UMAG_11940"/>
<dbReference type="VEuPathDB" id="FungiDB:UMAG_11940"/>
<dbReference type="InParanoid" id="A0A0D1C5X6"/>
<dbReference type="OrthoDB" id="2543666at2759"/>
<dbReference type="Proteomes" id="UP000000561">
    <property type="component" value="Chromosome 7"/>
</dbReference>
<feature type="signal peptide" evidence="1">
    <location>
        <begin position="1"/>
        <end position="24"/>
    </location>
</feature>
<feature type="chain" id="PRO_5002227964" description="Late effector protein 1">
    <location>
        <begin position="25"/>
        <end position="86"/>
    </location>
</feature>
<comment type="function">
    <text evidence="2">Core effector contributing to spore formation and tumor formation at the host plant (PubMed:33843063). Modulates surface hydrophobicity promoting cell-cell or cell-surface contacts (PubMed:33843063). Lep1 and rep1 interact in aerial hyphae to form a strong hydrophobic layer (PubMed:33843063). Plays a crucial role in hyphal aggregation that might be a prerequisite for strong proliferation of diploid cells and for induction of the morphological changes associated with spore formation (PubMed:33843063).</text>
</comment>
<comment type="subunit">
    <text evidence="2">Interacts at the cell wall with secreted rep1 repellent peptides.</text>
</comment>
<comment type="subcellular location">
    <subcellularLocation>
        <location evidence="2">Secreted</location>
    </subcellularLocation>
    <subcellularLocation>
        <location evidence="2">Secreted</location>
        <location evidence="2">Cell wall</location>
    </subcellularLocation>
</comment>
<comment type="disruption phenotype">
    <text evidence="2">Leads to attenuated hyphal aggregation, fails to undergo massive late proliferation and produces only a few spores in plant tumors, resulting in reduced virulence.</text>
</comment>
<comment type="similarity">
    <text evidence="4">Belongs to the lep1 family.</text>
</comment>